<keyword id="KW-0067">ATP-binding</keyword>
<keyword id="KW-0436">Ligase</keyword>
<keyword id="KW-0547">Nucleotide-binding</keyword>
<keyword id="KW-0648">Protein biosynthesis</keyword>
<keyword id="KW-1185">Reference proteome</keyword>
<evidence type="ECO:0000255" key="1">
    <source>
        <dbReference type="HAMAP-Rule" id="MF_00122"/>
    </source>
</evidence>
<feature type="chain" id="PRO_0000105326" description="Glutamyl-tRNA(Gln) amidotransferase subunit C">
    <location>
        <begin position="1"/>
        <end position="95"/>
    </location>
</feature>
<comment type="function">
    <text evidence="1">Allows the formation of correctly charged Asn-tRNA(Asn) or Gln-tRNA(Gln) through the transamidation of misacylated Asp-tRNA(Asn) or Glu-tRNA(Gln) in organisms which lack either or both of asparaginyl-tRNA or glutaminyl-tRNA synthetases. The reaction takes place in the presence of glutamine and ATP through an activated phospho-Asp-tRNA(Asn) or phospho-Glu-tRNA(Gln).</text>
</comment>
<comment type="catalytic activity">
    <reaction evidence="1">
        <text>L-glutamyl-tRNA(Gln) + L-glutamine + ATP + H2O = L-glutaminyl-tRNA(Gln) + L-glutamate + ADP + phosphate + H(+)</text>
        <dbReference type="Rhea" id="RHEA:17521"/>
        <dbReference type="Rhea" id="RHEA-COMP:9681"/>
        <dbReference type="Rhea" id="RHEA-COMP:9684"/>
        <dbReference type="ChEBI" id="CHEBI:15377"/>
        <dbReference type="ChEBI" id="CHEBI:15378"/>
        <dbReference type="ChEBI" id="CHEBI:29985"/>
        <dbReference type="ChEBI" id="CHEBI:30616"/>
        <dbReference type="ChEBI" id="CHEBI:43474"/>
        <dbReference type="ChEBI" id="CHEBI:58359"/>
        <dbReference type="ChEBI" id="CHEBI:78520"/>
        <dbReference type="ChEBI" id="CHEBI:78521"/>
        <dbReference type="ChEBI" id="CHEBI:456216"/>
    </reaction>
</comment>
<comment type="catalytic activity">
    <reaction evidence="1">
        <text>L-aspartyl-tRNA(Asn) + L-glutamine + ATP + H2O = L-asparaginyl-tRNA(Asn) + L-glutamate + ADP + phosphate + 2 H(+)</text>
        <dbReference type="Rhea" id="RHEA:14513"/>
        <dbReference type="Rhea" id="RHEA-COMP:9674"/>
        <dbReference type="Rhea" id="RHEA-COMP:9677"/>
        <dbReference type="ChEBI" id="CHEBI:15377"/>
        <dbReference type="ChEBI" id="CHEBI:15378"/>
        <dbReference type="ChEBI" id="CHEBI:29985"/>
        <dbReference type="ChEBI" id="CHEBI:30616"/>
        <dbReference type="ChEBI" id="CHEBI:43474"/>
        <dbReference type="ChEBI" id="CHEBI:58359"/>
        <dbReference type="ChEBI" id="CHEBI:78515"/>
        <dbReference type="ChEBI" id="CHEBI:78516"/>
        <dbReference type="ChEBI" id="CHEBI:456216"/>
    </reaction>
</comment>
<comment type="subunit">
    <text evidence="1">Heterotrimer of A, B and C subunits.</text>
</comment>
<comment type="similarity">
    <text evidence="1">Belongs to the GatC family.</text>
</comment>
<name>GATC_RHIME</name>
<protein>
    <recommendedName>
        <fullName>Glutamyl-tRNA(Gln) amidotransferase subunit C</fullName>
        <shortName>Glu-ADT subunit C</shortName>
        <ecNumber evidence="1">6.3.5.-</ecNumber>
    </recommendedName>
</protein>
<sequence>MSVDLATVKRVARLARIAVSDEEAERMTGELNGILGFVEQLSEVDVDGVEPMTSVMPMKMKKRDDIVADGDKADDIVANAPNSDRNFFLVPKVVE</sequence>
<proteinExistence type="inferred from homology"/>
<accession>Q92QK8</accession>
<dbReference type="EC" id="6.3.5.-" evidence="1"/>
<dbReference type="EMBL" id="AL591688">
    <property type="protein sequence ID" value="CAC45890.1"/>
    <property type="molecule type" value="Genomic_DNA"/>
</dbReference>
<dbReference type="RefSeq" id="NP_385417.1">
    <property type="nucleotide sequence ID" value="NC_003047.1"/>
</dbReference>
<dbReference type="RefSeq" id="WP_003533050.1">
    <property type="nucleotide sequence ID" value="NC_003047.1"/>
</dbReference>
<dbReference type="SMR" id="Q92QK8"/>
<dbReference type="EnsemblBacteria" id="CAC45890">
    <property type="protein sequence ID" value="CAC45890"/>
    <property type="gene ID" value="SMc01353"/>
</dbReference>
<dbReference type="GeneID" id="89575634"/>
<dbReference type="KEGG" id="sme:SMc01353"/>
<dbReference type="PATRIC" id="fig|266834.11.peg.2725"/>
<dbReference type="eggNOG" id="COG0721">
    <property type="taxonomic scope" value="Bacteria"/>
</dbReference>
<dbReference type="HOGENOM" id="CLU_105899_2_0_5"/>
<dbReference type="OrthoDB" id="9794326at2"/>
<dbReference type="Proteomes" id="UP000001976">
    <property type="component" value="Chromosome"/>
</dbReference>
<dbReference type="GO" id="GO:0050566">
    <property type="term" value="F:asparaginyl-tRNA synthase (glutamine-hydrolyzing) activity"/>
    <property type="evidence" value="ECO:0007669"/>
    <property type="project" value="RHEA"/>
</dbReference>
<dbReference type="GO" id="GO:0005524">
    <property type="term" value="F:ATP binding"/>
    <property type="evidence" value="ECO:0007669"/>
    <property type="project" value="UniProtKB-KW"/>
</dbReference>
<dbReference type="GO" id="GO:0050567">
    <property type="term" value="F:glutaminyl-tRNA synthase (glutamine-hydrolyzing) activity"/>
    <property type="evidence" value="ECO:0007669"/>
    <property type="project" value="UniProtKB-UniRule"/>
</dbReference>
<dbReference type="GO" id="GO:0070681">
    <property type="term" value="P:glutaminyl-tRNAGln biosynthesis via transamidation"/>
    <property type="evidence" value="ECO:0007669"/>
    <property type="project" value="TreeGrafter"/>
</dbReference>
<dbReference type="GO" id="GO:0006450">
    <property type="term" value="P:regulation of translational fidelity"/>
    <property type="evidence" value="ECO:0007669"/>
    <property type="project" value="InterPro"/>
</dbReference>
<dbReference type="GO" id="GO:0006412">
    <property type="term" value="P:translation"/>
    <property type="evidence" value="ECO:0007669"/>
    <property type="project" value="UniProtKB-UniRule"/>
</dbReference>
<dbReference type="Gene3D" id="1.10.20.60">
    <property type="entry name" value="Glu-tRNAGln amidotransferase C subunit, N-terminal domain"/>
    <property type="match status" value="1"/>
</dbReference>
<dbReference type="HAMAP" id="MF_00122">
    <property type="entry name" value="GatC"/>
    <property type="match status" value="1"/>
</dbReference>
<dbReference type="InterPro" id="IPR036113">
    <property type="entry name" value="Asp/Glu-ADT_sf_sub_c"/>
</dbReference>
<dbReference type="InterPro" id="IPR003837">
    <property type="entry name" value="GatC"/>
</dbReference>
<dbReference type="NCBIfam" id="TIGR00135">
    <property type="entry name" value="gatC"/>
    <property type="match status" value="1"/>
</dbReference>
<dbReference type="PANTHER" id="PTHR15004">
    <property type="entry name" value="GLUTAMYL-TRNA(GLN) AMIDOTRANSFERASE SUBUNIT C, MITOCHONDRIAL"/>
    <property type="match status" value="1"/>
</dbReference>
<dbReference type="PANTHER" id="PTHR15004:SF0">
    <property type="entry name" value="GLUTAMYL-TRNA(GLN) AMIDOTRANSFERASE SUBUNIT C, MITOCHONDRIAL"/>
    <property type="match status" value="1"/>
</dbReference>
<dbReference type="Pfam" id="PF02686">
    <property type="entry name" value="GatC"/>
    <property type="match status" value="1"/>
</dbReference>
<dbReference type="SUPFAM" id="SSF141000">
    <property type="entry name" value="Glu-tRNAGln amidotransferase C subunit"/>
    <property type="match status" value="1"/>
</dbReference>
<reference key="1">
    <citation type="journal article" date="2001" name="Proc. Natl. Acad. Sci. U.S.A.">
        <title>Analysis of the chromosome sequence of the legume symbiont Sinorhizobium meliloti strain 1021.</title>
        <authorList>
            <person name="Capela D."/>
            <person name="Barloy-Hubler F."/>
            <person name="Gouzy J."/>
            <person name="Bothe G."/>
            <person name="Ampe F."/>
            <person name="Batut J."/>
            <person name="Boistard P."/>
            <person name="Becker A."/>
            <person name="Boutry M."/>
            <person name="Cadieu E."/>
            <person name="Dreano S."/>
            <person name="Gloux S."/>
            <person name="Godrie T."/>
            <person name="Goffeau A."/>
            <person name="Kahn D."/>
            <person name="Kiss E."/>
            <person name="Lelaure V."/>
            <person name="Masuy D."/>
            <person name="Pohl T."/>
            <person name="Portetelle D."/>
            <person name="Puehler A."/>
            <person name="Purnelle B."/>
            <person name="Ramsperger U."/>
            <person name="Renard C."/>
            <person name="Thebault P."/>
            <person name="Vandenbol M."/>
            <person name="Weidner S."/>
            <person name="Galibert F."/>
        </authorList>
    </citation>
    <scope>NUCLEOTIDE SEQUENCE [LARGE SCALE GENOMIC DNA]</scope>
    <source>
        <strain>1021</strain>
    </source>
</reference>
<reference key="2">
    <citation type="journal article" date="2001" name="Science">
        <title>The composite genome of the legume symbiont Sinorhizobium meliloti.</title>
        <authorList>
            <person name="Galibert F."/>
            <person name="Finan T.M."/>
            <person name="Long S.R."/>
            <person name="Puehler A."/>
            <person name="Abola P."/>
            <person name="Ampe F."/>
            <person name="Barloy-Hubler F."/>
            <person name="Barnett M.J."/>
            <person name="Becker A."/>
            <person name="Boistard P."/>
            <person name="Bothe G."/>
            <person name="Boutry M."/>
            <person name="Bowser L."/>
            <person name="Buhrmester J."/>
            <person name="Cadieu E."/>
            <person name="Capela D."/>
            <person name="Chain P."/>
            <person name="Cowie A."/>
            <person name="Davis R.W."/>
            <person name="Dreano S."/>
            <person name="Federspiel N.A."/>
            <person name="Fisher R.F."/>
            <person name="Gloux S."/>
            <person name="Godrie T."/>
            <person name="Goffeau A."/>
            <person name="Golding B."/>
            <person name="Gouzy J."/>
            <person name="Gurjal M."/>
            <person name="Hernandez-Lucas I."/>
            <person name="Hong A."/>
            <person name="Huizar L."/>
            <person name="Hyman R.W."/>
            <person name="Jones T."/>
            <person name="Kahn D."/>
            <person name="Kahn M.L."/>
            <person name="Kalman S."/>
            <person name="Keating D.H."/>
            <person name="Kiss E."/>
            <person name="Komp C."/>
            <person name="Lelaure V."/>
            <person name="Masuy D."/>
            <person name="Palm C."/>
            <person name="Peck M.C."/>
            <person name="Pohl T.M."/>
            <person name="Portetelle D."/>
            <person name="Purnelle B."/>
            <person name="Ramsperger U."/>
            <person name="Surzycki R."/>
            <person name="Thebault P."/>
            <person name="Vandenbol M."/>
            <person name="Vorhoelter F.J."/>
            <person name="Weidner S."/>
            <person name="Wells D.H."/>
            <person name="Wong K."/>
            <person name="Yeh K.-C."/>
            <person name="Batut J."/>
        </authorList>
    </citation>
    <scope>NUCLEOTIDE SEQUENCE [LARGE SCALE GENOMIC DNA]</scope>
    <source>
        <strain>1021</strain>
    </source>
</reference>
<gene>
    <name evidence="1" type="primary">gatC</name>
    <name type="ordered locus">R01311</name>
    <name type="ORF">SMc01353</name>
</gene>
<organism>
    <name type="scientific">Rhizobium meliloti (strain 1021)</name>
    <name type="common">Ensifer meliloti</name>
    <name type="synonym">Sinorhizobium meliloti</name>
    <dbReference type="NCBI Taxonomy" id="266834"/>
    <lineage>
        <taxon>Bacteria</taxon>
        <taxon>Pseudomonadati</taxon>
        <taxon>Pseudomonadota</taxon>
        <taxon>Alphaproteobacteria</taxon>
        <taxon>Hyphomicrobiales</taxon>
        <taxon>Rhizobiaceae</taxon>
        <taxon>Sinorhizobium/Ensifer group</taxon>
        <taxon>Sinorhizobium</taxon>
    </lineage>
</organism>